<protein>
    <recommendedName>
        <fullName evidence="1">4-hydroxy-3-methylbut-2-en-1-yl diphosphate synthase (flavodoxin)</fullName>
        <ecNumber evidence="1">1.17.7.3</ecNumber>
    </recommendedName>
    <alternativeName>
        <fullName evidence="1">1-hydroxy-2-methyl-2-(E)-butenyl 4-diphosphate synthase</fullName>
    </alternativeName>
</protein>
<gene>
    <name evidence="1" type="primary">ispG</name>
    <name type="ordered locus">ECUMN_2835</name>
</gene>
<keyword id="KW-0004">4Fe-4S</keyword>
<keyword id="KW-0408">Iron</keyword>
<keyword id="KW-0411">Iron-sulfur</keyword>
<keyword id="KW-0414">Isoprene biosynthesis</keyword>
<keyword id="KW-0479">Metal-binding</keyword>
<keyword id="KW-0560">Oxidoreductase</keyword>
<comment type="function">
    <text evidence="1">Converts 2C-methyl-D-erythritol 2,4-cyclodiphosphate (ME-2,4cPP) into 1-hydroxy-2-methyl-2-(E)-butenyl 4-diphosphate.</text>
</comment>
<comment type="catalytic activity">
    <reaction evidence="1">
        <text>(2E)-4-hydroxy-3-methylbut-2-enyl diphosphate + oxidized [flavodoxin] + H2O + 2 H(+) = 2-C-methyl-D-erythritol 2,4-cyclic diphosphate + reduced [flavodoxin]</text>
        <dbReference type="Rhea" id="RHEA:43604"/>
        <dbReference type="Rhea" id="RHEA-COMP:10622"/>
        <dbReference type="Rhea" id="RHEA-COMP:10623"/>
        <dbReference type="ChEBI" id="CHEBI:15377"/>
        <dbReference type="ChEBI" id="CHEBI:15378"/>
        <dbReference type="ChEBI" id="CHEBI:57618"/>
        <dbReference type="ChEBI" id="CHEBI:58210"/>
        <dbReference type="ChEBI" id="CHEBI:58483"/>
        <dbReference type="ChEBI" id="CHEBI:128753"/>
        <dbReference type="EC" id="1.17.7.3"/>
    </reaction>
</comment>
<comment type="cofactor">
    <cofactor evidence="1">
        <name>[4Fe-4S] cluster</name>
        <dbReference type="ChEBI" id="CHEBI:49883"/>
    </cofactor>
    <text evidence="1">Binds 1 [4Fe-4S] cluster.</text>
</comment>
<comment type="pathway">
    <text evidence="1">Isoprenoid biosynthesis; isopentenyl diphosphate biosynthesis via DXP pathway; isopentenyl diphosphate from 1-deoxy-D-xylulose 5-phosphate: step 5/6.</text>
</comment>
<comment type="similarity">
    <text evidence="1">Belongs to the IspG family.</text>
</comment>
<dbReference type="EC" id="1.17.7.3" evidence="1"/>
<dbReference type="EMBL" id="CU928163">
    <property type="protein sequence ID" value="CAR14012.1"/>
    <property type="molecule type" value="Genomic_DNA"/>
</dbReference>
<dbReference type="RefSeq" id="WP_000551818.1">
    <property type="nucleotide sequence ID" value="NC_011751.1"/>
</dbReference>
<dbReference type="RefSeq" id="YP_002413537.1">
    <property type="nucleotide sequence ID" value="NC_011751.1"/>
</dbReference>
<dbReference type="SMR" id="B7N6A3"/>
<dbReference type="STRING" id="585056.ECUMN_2835"/>
<dbReference type="GeneID" id="93774621"/>
<dbReference type="KEGG" id="eum:ECUMN_2835"/>
<dbReference type="PATRIC" id="fig|585056.7.peg.3020"/>
<dbReference type="HOGENOM" id="CLU_042258_0_0_6"/>
<dbReference type="UniPathway" id="UPA00056">
    <property type="reaction ID" value="UER00096"/>
</dbReference>
<dbReference type="Proteomes" id="UP000007097">
    <property type="component" value="Chromosome"/>
</dbReference>
<dbReference type="GO" id="GO:0051539">
    <property type="term" value="F:4 iron, 4 sulfur cluster binding"/>
    <property type="evidence" value="ECO:0007669"/>
    <property type="project" value="UniProtKB-UniRule"/>
</dbReference>
<dbReference type="GO" id="GO:0046429">
    <property type="term" value="F:4-hydroxy-3-methylbut-2-en-1-yl diphosphate synthase activity (ferredoxin)"/>
    <property type="evidence" value="ECO:0007669"/>
    <property type="project" value="UniProtKB-UniRule"/>
</dbReference>
<dbReference type="GO" id="GO:0141197">
    <property type="term" value="F:4-hydroxy-3-methylbut-2-enyl-diphosphate synthase activity (flavodoxin)"/>
    <property type="evidence" value="ECO:0007669"/>
    <property type="project" value="UniProtKB-EC"/>
</dbReference>
<dbReference type="GO" id="GO:0005506">
    <property type="term" value="F:iron ion binding"/>
    <property type="evidence" value="ECO:0007669"/>
    <property type="project" value="InterPro"/>
</dbReference>
<dbReference type="GO" id="GO:0019288">
    <property type="term" value="P:isopentenyl diphosphate biosynthetic process, methylerythritol 4-phosphate pathway"/>
    <property type="evidence" value="ECO:0007669"/>
    <property type="project" value="UniProtKB-UniRule"/>
</dbReference>
<dbReference type="GO" id="GO:0016114">
    <property type="term" value="P:terpenoid biosynthetic process"/>
    <property type="evidence" value="ECO:0007669"/>
    <property type="project" value="InterPro"/>
</dbReference>
<dbReference type="FunFam" id="3.20.20.20:FF:000001">
    <property type="entry name" value="4-hydroxy-3-methylbut-2-en-1-yl diphosphate synthase (flavodoxin)"/>
    <property type="match status" value="1"/>
</dbReference>
<dbReference type="FunFam" id="3.30.413.10:FF:000002">
    <property type="entry name" value="4-hydroxy-3-methylbut-2-en-1-yl diphosphate synthase (flavodoxin)"/>
    <property type="match status" value="1"/>
</dbReference>
<dbReference type="Gene3D" id="3.20.20.20">
    <property type="entry name" value="Dihydropteroate synthase-like"/>
    <property type="match status" value="1"/>
</dbReference>
<dbReference type="Gene3D" id="3.30.413.10">
    <property type="entry name" value="Sulfite Reductase Hemoprotein, domain 1"/>
    <property type="match status" value="1"/>
</dbReference>
<dbReference type="HAMAP" id="MF_00159">
    <property type="entry name" value="IspG"/>
    <property type="match status" value="1"/>
</dbReference>
<dbReference type="InterPro" id="IPR011005">
    <property type="entry name" value="Dihydropteroate_synth-like_sf"/>
</dbReference>
<dbReference type="InterPro" id="IPR016425">
    <property type="entry name" value="IspG_bac"/>
</dbReference>
<dbReference type="InterPro" id="IPR004588">
    <property type="entry name" value="IspG_bac-typ"/>
</dbReference>
<dbReference type="InterPro" id="IPR045854">
    <property type="entry name" value="NO2/SO3_Rdtase_4Fe4S_sf"/>
</dbReference>
<dbReference type="NCBIfam" id="TIGR00612">
    <property type="entry name" value="ispG_gcpE"/>
    <property type="match status" value="1"/>
</dbReference>
<dbReference type="NCBIfam" id="NF001540">
    <property type="entry name" value="PRK00366.1"/>
    <property type="match status" value="1"/>
</dbReference>
<dbReference type="PANTHER" id="PTHR30454">
    <property type="entry name" value="4-HYDROXY-3-METHYLBUT-2-EN-1-YL DIPHOSPHATE SYNTHASE"/>
    <property type="match status" value="1"/>
</dbReference>
<dbReference type="PANTHER" id="PTHR30454:SF0">
    <property type="entry name" value="4-HYDROXY-3-METHYLBUT-2-EN-1-YL DIPHOSPHATE SYNTHASE (FERREDOXIN), CHLOROPLASTIC"/>
    <property type="match status" value="1"/>
</dbReference>
<dbReference type="Pfam" id="PF04551">
    <property type="entry name" value="GcpE"/>
    <property type="match status" value="1"/>
</dbReference>
<dbReference type="PIRSF" id="PIRSF004640">
    <property type="entry name" value="IspG"/>
    <property type="match status" value="1"/>
</dbReference>
<dbReference type="SUPFAM" id="SSF51717">
    <property type="entry name" value="Dihydropteroate synthetase-like"/>
    <property type="match status" value="1"/>
</dbReference>
<dbReference type="SUPFAM" id="SSF56014">
    <property type="entry name" value="Nitrite and sulphite reductase 4Fe-4S domain-like"/>
    <property type="match status" value="1"/>
</dbReference>
<feature type="chain" id="PRO_1000191081" description="4-hydroxy-3-methylbut-2-en-1-yl diphosphate synthase (flavodoxin)">
    <location>
        <begin position="1"/>
        <end position="372"/>
    </location>
</feature>
<feature type="binding site" evidence="1">
    <location>
        <position position="270"/>
    </location>
    <ligand>
        <name>[4Fe-4S] cluster</name>
        <dbReference type="ChEBI" id="CHEBI:49883"/>
    </ligand>
</feature>
<feature type="binding site" evidence="1">
    <location>
        <position position="273"/>
    </location>
    <ligand>
        <name>[4Fe-4S] cluster</name>
        <dbReference type="ChEBI" id="CHEBI:49883"/>
    </ligand>
</feature>
<feature type="binding site" evidence="1">
    <location>
        <position position="305"/>
    </location>
    <ligand>
        <name>[4Fe-4S] cluster</name>
        <dbReference type="ChEBI" id="CHEBI:49883"/>
    </ligand>
</feature>
<feature type="binding site" evidence="1">
    <location>
        <position position="312"/>
    </location>
    <ligand>
        <name>[4Fe-4S] cluster</name>
        <dbReference type="ChEBI" id="CHEBI:49883"/>
    </ligand>
</feature>
<evidence type="ECO:0000255" key="1">
    <source>
        <dbReference type="HAMAP-Rule" id="MF_00159"/>
    </source>
</evidence>
<sequence>MHNQAPIQRRKSTRIYVGNVPIGDGAPIAVQSMTNTRTTDVEATVNQIKALERVGADIVRVSVPTMDAAEAFKLIKQRVNVPLVADIHFDYRIALKVAEYGVDCLRINPGNIGNEERIRMVVDCARDKNIPIRIGVNAGSLEKDLQEKYGEPTPQALLESAMRHVDHLDRLNFDQFKVSVKASDVFLAVESYRLLAKQIDQPLHLGITEAGGARSGAVKSAIGLGLLLSEGIGDTLRVSLAADPVEEIKVGFDILKSLRIRSRGINFIACPTCSRQEFDVIGTVNALEQRLEDIITPMDVSIIGCVVNGPGEALVSTLGVTGGNKKSGLYEDGVRKDRLDNNDMIDQLEARIRAKASQLDEARRIDVQQVEK</sequence>
<reference key="1">
    <citation type="journal article" date="2009" name="PLoS Genet.">
        <title>Organised genome dynamics in the Escherichia coli species results in highly diverse adaptive paths.</title>
        <authorList>
            <person name="Touchon M."/>
            <person name="Hoede C."/>
            <person name="Tenaillon O."/>
            <person name="Barbe V."/>
            <person name="Baeriswyl S."/>
            <person name="Bidet P."/>
            <person name="Bingen E."/>
            <person name="Bonacorsi S."/>
            <person name="Bouchier C."/>
            <person name="Bouvet O."/>
            <person name="Calteau A."/>
            <person name="Chiapello H."/>
            <person name="Clermont O."/>
            <person name="Cruveiller S."/>
            <person name="Danchin A."/>
            <person name="Diard M."/>
            <person name="Dossat C."/>
            <person name="Karoui M.E."/>
            <person name="Frapy E."/>
            <person name="Garry L."/>
            <person name="Ghigo J.M."/>
            <person name="Gilles A.M."/>
            <person name="Johnson J."/>
            <person name="Le Bouguenec C."/>
            <person name="Lescat M."/>
            <person name="Mangenot S."/>
            <person name="Martinez-Jehanne V."/>
            <person name="Matic I."/>
            <person name="Nassif X."/>
            <person name="Oztas S."/>
            <person name="Petit M.A."/>
            <person name="Pichon C."/>
            <person name="Rouy Z."/>
            <person name="Ruf C.S."/>
            <person name="Schneider D."/>
            <person name="Tourret J."/>
            <person name="Vacherie B."/>
            <person name="Vallenet D."/>
            <person name="Medigue C."/>
            <person name="Rocha E.P.C."/>
            <person name="Denamur E."/>
        </authorList>
    </citation>
    <scope>NUCLEOTIDE SEQUENCE [LARGE SCALE GENOMIC DNA]</scope>
    <source>
        <strain>UMN026 / ExPEC</strain>
    </source>
</reference>
<proteinExistence type="inferred from homology"/>
<organism>
    <name type="scientific">Escherichia coli O17:K52:H18 (strain UMN026 / ExPEC)</name>
    <dbReference type="NCBI Taxonomy" id="585056"/>
    <lineage>
        <taxon>Bacteria</taxon>
        <taxon>Pseudomonadati</taxon>
        <taxon>Pseudomonadota</taxon>
        <taxon>Gammaproteobacteria</taxon>
        <taxon>Enterobacterales</taxon>
        <taxon>Enterobacteriaceae</taxon>
        <taxon>Escherichia</taxon>
    </lineage>
</organism>
<accession>B7N6A3</accession>
<name>ISPG_ECOLU</name>